<comment type="function">
    <text evidence="1">One of the primary rRNA binding proteins, it binds directly to 16S rRNA central domain where it helps coordinate assembly of the platform of the 30S subunit.</text>
</comment>
<comment type="subunit">
    <text evidence="1">Part of the 30S ribosomal subunit. Contacts proteins S5 and S12.</text>
</comment>
<comment type="similarity">
    <text evidence="1">Belongs to the universal ribosomal protein uS8 family.</text>
</comment>
<accession>A9NAY4</accession>
<evidence type="ECO:0000255" key="1">
    <source>
        <dbReference type="HAMAP-Rule" id="MF_01302"/>
    </source>
</evidence>
<evidence type="ECO:0000305" key="2"/>
<feature type="chain" id="PRO_1000085919" description="Small ribosomal subunit protein uS8">
    <location>
        <begin position="1"/>
        <end position="130"/>
    </location>
</feature>
<organism>
    <name type="scientific">Coxiella burnetii (strain RSA 331 / Henzerling II)</name>
    <dbReference type="NCBI Taxonomy" id="360115"/>
    <lineage>
        <taxon>Bacteria</taxon>
        <taxon>Pseudomonadati</taxon>
        <taxon>Pseudomonadota</taxon>
        <taxon>Gammaproteobacteria</taxon>
        <taxon>Legionellales</taxon>
        <taxon>Coxiellaceae</taxon>
        <taxon>Coxiella</taxon>
    </lineage>
</organism>
<gene>
    <name evidence="1" type="primary">rpsH</name>
    <name type="ordered locus">COXBURSA331_A0351</name>
</gene>
<dbReference type="EMBL" id="CP000890">
    <property type="protein sequence ID" value="ABX77506.1"/>
    <property type="molecule type" value="Genomic_DNA"/>
</dbReference>
<dbReference type="SMR" id="A9NAY4"/>
<dbReference type="KEGG" id="cbs:COXBURSA331_A0351"/>
<dbReference type="HOGENOM" id="CLU_098428_0_0_6"/>
<dbReference type="GO" id="GO:1990904">
    <property type="term" value="C:ribonucleoprotein complex"/>
    <property type="evidence" value="ECO:0007669"/>
    <property type="project" value="UniProtKB-KW"/>
</dbReference>
<dbReference type="GO" id="GO:0005840">
    <property type="term" value="C:ribosome"/>
    <property type="evidence" value="ECO:0007669"/>
    <property type="project" value="UniProtKB-KW"/>
</dbReference>
<dbReference type="GO" id="GO:0019843">
    <property type="term" value="F:rRNA binding"/>
    <property type="evidence" value="ECO:0007669"/>
    <property type="project" value="UniProtKB-UniRule"/>
</dbReference>
<dbReference type="GO" id="GO:0003735">
    <property type="term" value="F:structural constituent of ribosome"/>
    <property type="evidence" value="ECO:0007669"/>
    <property type="project" value="InterPro"/>
</dbReference>
<dbReference type="GO" id="GO:0006412">
    <property type="term" value="P:translation"/>
    <property type="evidence" value="ECO:0007669"/>
    <property type="project" value="UniProtKB-UniRule"/>
</dbReference>
<dbReference type="FunFam" id="3.30.1370.30:FF:000002">
    <property type="entry name" value="30S ribosomal protein S8"/>
    <property type="match status" value="1"/>
</dbReference>
<dbReference type="FunFam" id="3.30.1490.10:FF:000001">
    <property type="entry name" value="30S ribosomal protein S8"/>
    <property type="match status" value="1"/>
</dbReference>
<dbReference type="Gene3D" id="3.30.1370.30">
    <property type="match status" value="1"/>
</dbReference>
<dbReference type="Gene3D" id="3.30.1490.10">
    <property type="match status" value="1"/>
</dbReference>
<dbReference type="HAMAP" id="MF_01302_B">
    <property type="entry name" value="Ribosomal_uS8_B"/>
    <property type="match status" value="1"/>
</dbReference>
<dbReference type="InterPro" id="IPR000630">
    <property type="entry name" value="Ribosomal_uS8"/>
</dbReference>
<dbReference type="InterPro" id="IPR047863">
    <property type="entry name" value="Ribosomal_uS8_CS"/>
</dbReference>
<dbReference type="InterPro" id="IPR035987">
    <property type="entry name" value="Ribosomal_uS8_sf"/>
</dbReference>
<dbReference type="NCBIfam" id="NF001109">
    <property type="entry name" value="PRK00136.1"/>
    <property type="match status" value="1"/>
</dbReference>
<dbReference type="PANTHER" id="PTHR11758">
    <property type="entry name" value="40S RIBOSOMAL PROTEIN S15A"/>
    <property type="match status" value="1"/>
</dbReference>
<dbReference type="Pfam" id="PF00410">
    <property type="entry name" value="Ribosomal_S8"/>
    <property type="match status" value="1"/>
</dbReference>
<dbReference type="SUPFAM" id="SSF56047">
    <property type="entry name" value="Ribosomal protein S8"/>
    <property type="match status" value="1"/>
</dbReference>
<dbReference type="PROSITE" id="PS00053">
    <property type="entry name" value="RIBOSOMAL_S8"/>
    <property type="match status" value="1"/>
</dbReference>
<proteinExistence type="inferred from homology"/>
<keyword id="KW-0687">Ribonucleoprotein</keyword>
<keyword id="KW-0689">Ribosomal protein</keyword>
<keyword id="KW-0694">RNA-binding</keyword>
<keyword id="KW-0699">rRNA-binding</keyword>
<reference key="1">
    <citation type="submission" date="2007-11" db="EMBL/GenBank/DDBJ databases">
        <title>Genome sequencing of phylogenetically and phenotypically diverse Coxiella burnetii isolates.</title>
        <authorList>
            <person name="Seshadri R."/>
            <person name="Samuel J.E."/>
        </authorList>
    </citation>
    <scope>NUCLEOTIDE SEQUENCE [LARGE SCALE GENOMIC DNA]</scope>
    <source>
        <strain>RSA 331 / Henzerling II</strain>
    </source>
</reference>
<protein>
    <recommendedName>
        <fullName evidence="1">Small ribosomal subunit protein uS8</fullName>
    </recommendedName>
    <alternativeName>
        <fullName evidence="2">30S ribosomal protein S8</fullName>
    </alternativeName>
</protein>
<name>RS8_COXBR</name>
<sequence length="130" mass="14569">MMQDPISDMLTRIRNAQAVRKKEVVMPRSKLKMSIANVLKEEGYIVDYREEGDLTKAQLVITLKYHEGESVISEIRRVSSPALQVYKSKDELPKVKNGLGIAIISTSKGVMSDRQARRLGEGGEVLCYVS</sequence>